<gene>
    <name evidence="16" type="primary">NDST1</name>
    <name type="synonym">HSST</name>
    <name type="synonym">HSST1</name>
</gene>
<evidence type="ECO:0000250" key="1">
    <source>
        <dbReference type="UniProtKB" id="Q3UHN9"/>
    </source>
</evidence>
<evidence type="ECO:0000255" key="2"/>
<evidence type="ECO:0000269" key="3">
    <source>
    </source>
</evidence>
<evidence type="ECO:0000269" key="4">
    <source>
    </source>
</evidence>
<evidence type="ECO:0000269" key="5">
    <source>
    </source>
</evidence>
<evidence type="ECO:0000269" key="6">
    <source>
    </source>
</evidence>
<evidence type="ECO:0000269" key="7">
    <source>
    </source>
</evidence>
<evidence type="ECO:0000269" key="8">
    <source>
    </source>
</evidence>
<evidence type="ECO:0000269" key="9">
    <source>
    </source>
</evidence>
<evidence type="ECO:0000303" key="10">
    <source>
    </source>
</evidence>
<evidence type="ECO:0000303" key="11">
    <source>
    </source>
</evidence>
<evidence type="ECO:0000305" key="12"/>
<evidence type="ECO:0000305" key="13">
    <source>
    </source>
</evidence>
<evidence type="ECO:0000305" key="14">
    <source>
    </source>
</evidence>
<evidence type="ECO:0000305" key="15">
    <source>
    </source>
</evidence>
<evidence type="ECO:0000312" key="16">
    <source>
        <dbReference type="HGNC" id="HGNC:7680"/>
    </source>
</evidence>
<evidence type="ECO:0007744" key="17">
    <source>
        <dbReference type="PDB" id="1NST"/>
    </source>
</evidence>
<evidence type="ECO:0007829" key="18">
    <source>
        <dbReference type="PDB" id="1NST"/>
    </source>
</evidence>
<evidence type="ECO:0007829" key="19">
    <source>
        <dbReference type="PDB" id="8CCY"/>
    </source>
</evidence>
<evidence type="ECO:0007829" key="20">
    <source>
        <dbReference type="PDB" id="8CD0"/>
    </source>
</evidence>
<evidence type="ECO:0007829" key="21">
    <source>
        <dbReference type="PDB" id="8CHS"/>
    </source>
</evidence>
<comment type="function">
    <molecule>Isoform 1</molecule>
    <text evidence="1 5 8">Essential bifunctional enzyme that catalyzes both the N-deacetylation and the N-sulfation of glucosamine (GlcNAc) of the glycosaminoglycan in heparan sulfate (PubMed:35137078, PubMed:9230113, PubMed:9744796). Modifies the GlcNAc-GlcA disaccharide repeating sugar backbone to make N-sulfated heparosan, a prerequisite substrate for later modifications in heparin biosynthesis (PubMed:9230113). Plays a role in determining the extent and pattern of sulfation of heparan sulfate. Participates in biosynthesis of heparan sulfate that can ultimately serve as L-selectin ligands, thereby playing a role in inflammatory response (By similarity). Required for the exosomal release of SDCBP, CD63 and syndecan (PubMed:22660413).</text>
</comment>
<comment type="function">
    <molecule>Isoform 3</molecule>
    <text evidence="7">Lacks both N-deacetylase and N-sulfotransferase activities. Acts as a dominant negative on isoform 1, likely by changing the composition of enzyme complexes responsible for elongation and modification of heparan sulfates.</text>
</comment>
<comment type="catalytic activity">
    <molecule>Isoform 1</molecule>
    <reaction evidence="7">
        <text>N-acetyl-alpha-D-glucosaminyl-[heparan sulfate](n) + H2O = alpha-D-glucosaminyl-[heparan sulfate](n) + acetate</text>
        <dbReference type="Rhea" id="RHEA:70587"/>
        <dbReference type="Rhea" id="RHEA-COMP:9830"/>
        <dbReference type="Rhea" id="RHEA-COMP:11585"/>
        <dbReference type="ChEBI" id="CHEBI:15377"/>
        <dbReference type="ChEBI" id="CHEBI:30089"/>
        <dbReference type="ChEBI" id="CHEBI:58388"/>
        <dbReference type="ChEBI" id="CHEBI:70974"/>
    </reaction>
    <physiologicalReaction direction="left-to-right" evidence="13">
        <dbReference type="Rhea" id="RHEA:70588"/>
    </physiologicalReaction>
</comment>
<comment type="catalytic activity">
    <molecule>Isoform 1</molecule>
    <reaction evidence="7 8 9">
        <text>alpha-D-glucosaminyl-[heparan sulfate](n) + 3'-phosphoadenylyl sulfate = N-sulfo-alpha-D-glucosaminyl-[heparan sulfate](n) + adenosine 3',5'-bisphosphate + 2 H(+)</text>
        <dbReference type="Rhea" id="RHEA:21980"/>
        <dbReference type="Rhea" id="RHEA-COMP:9830"/>
        <dbReference type="Rhea" id="RHEA-COMP:14602"/>
        <dbReference type="ChEBI" id="CHEBI:15378"/>
        <dbReference type="ChEBI" id="CHEBI:58339"/>
        <dbReference type="ChEBI" id="CHEBI:58343"/>
        <dbReference type="ChEBI" id="CHEBI:58388"/>
        <dbReference type="ChEBI" id="CHEBI:140572"/>
        <dbReference type="EC" id="2.8.2.8"/>
    </reaction>
    <physiologicalReaction direction="left-to-right" evidence="8">
        <dbReference type="Rhea" id="RHEA:21981"/>
    </physiologicalReaction>
</comment>
<comment type="pathway">
    <molecule>Isoform 1</molecule>
    <text evidence="14 15">Glycan metabolism; heparan sulfate biosynthesis.</text>
</comment>
<comment type="pathway">
    <molecule>Isoform 1</molecule>
    <text evidence="14 15">Glycan metabolism; heparin biosynthesis.</text>
</comment>
<comment type="subunit">
    <text evidence="3">Monomer.</text>
</comment>
<comment type="subunit">
    <molecule>Isoform 1</molecule>
    <text evidence="7">Interacts with heparan sulfate co-polymerase subunits EXT1 and EXT2. Interacts with NDST1 isoform 3.</text>
</comment>
<comment type="subunit">
    <molecule>Isoform 3</molecule>
    <text evidence="7">Interacts with heparan sulfate co-polymerase subunits EXT1 and EXT2. Interacts with NDST1 isoform 1.</text>
</comment>
<comment type="subcellular location">
    <molecule>Isoform 1</molecule>
    <subcellularLocation>
        <location evidence="8">Golgi apparatus</location>
        <location evidence="8">trans-Golgi network membrane</location>
        <topology evidence="2">Single-pass type II membrane protein</topology>
    </subcellularLocation>
    <subcellularLocation>
        <location evidence="7">Golgi apparatus</location>
        <location evidence="7">cis-Golgi network membrane</location>
        <topology evidence="2">Single-pass type II membrane protein</topology>
    </subcellularLocation>
</comment>
<comment type="subcellular location">
    <molecule>Isoform 3</molecule>
    <subcellularLocation>
        <location evidence="7">Golgi apparatus</location>
        <location evidence="7">cis-Golgi network membrane</location>
        <topology evidence="2">Single-pass type II membrane protein</topology>
    </subcellularLocation>
</comment>
<comment type="alternative products">
    <event type="alternative splicing"/>
    <isoform>
        <id>P52848-1</id>
        <name>1</name>
        <name evidence="11">NDST1A</name>
        <sequence type="displayed"/>
    </isoform>
    <isoform>
        <id>P52848-2</id>
        <name>2</name>
        <sequence type="described" ref="VSP_017397 VSP_017398"/>
    </isoform>
    <isoform>
        <id>P52848-3</id>
        <name>3</name>
        <name evidence="11">NDST1B</name>
        <sequence type="described" ref="VSP_061518"/>
    </isoform>
</comment>
<comment type="tissue specificity">
    <text evidence="8">Widely expressed. Expression is most abundant in heart, liver and pancreas.</text>
</comment>
<comment type="disease" evidence="6">
    <disease id="DI-04283">
        <name>Intellectual developmental disorder, autosomal recessive 46</name>
        <acronym>MRT46</acronym>
        <description>A disorder characterized by significantly below average general intellectual functioning associated with impairments in adaptive behavior and manifested during the developmental period. MRT46 manifestations include delayed psychomotor development apparent from infancy or early childhood, delayed or absent expressive speech, hypotonia, and therapy-responsive seizures in some patients. Behavioral abnormalities are variable and include aggression, self-injurious behavior, and sleep disturbances.</description>
        <dbReference type="MIM" id="616116"/>
    </disease>
    <text>The disease is caused by variants affecting the gene represented in this entry.</text>
</comment>
<comment type="miscellaneous">
    <text>The presence of 4 different heparan sulfate N-deacetylase/N-sulfotransferase enzymes in mammals, as well as differences in their enzyme activity suggest that some initiate heparan sulfate modification/sulfation reactions, whereas other later on fill in or extend already modified heparan sulfate sequences.</text>
</comment>
<comment type="miscellaneous">
    <molecule>Isoform 3</molecule>
    <text evidence="13">The increased expression in several types of cancer is associated with shorter survival.</text>
</comment>
<comment type="similarity">
    <text evidence="12">Belongs to the sulfotransferase 1 family. NDST subfamily.</text>
</comment>
<feature type="chain" id="PRO_0000085210" description="Bifunctional heparan sulfate N-deacetylase/N-sulfotransferase 1">
    <location>
        <begin position="1"/>
        <end position="882"/>
    </location>
</feature>
<feature type="topological domain" description="Cytoplasmic" evidence="2">
    <location>
        <begin position="1"/>
        <end position="17"/>
    </location>
</feature>
<feature type="transmembrane region" description="Helical; Signal-anchor for type II membrane protein" evidence="2">
    <location>
        <begin position="18"/>
        <end position="39"/>
    </location>
</feature>
<feature type="topological domain" description="Lumenal" evidence="2">
    <location>
        <begin position="40"/>
        <end position="882"/>
    </location>
</feature>
<feature type="region of interest" description="Sufficient for localization to Golgi membrane" evidence="8">
    <location>
        <begin position="1"/>
        <end position="169"/>
    </location>
</feature>
<feature type="region of interest" description="Heparan sulfate N-deacetylase 1">
    <location>
        <begin position="40"/>
        <end position="598"/>
    </location>
</feature>
<feature type="region of interest" description="Heparan sulfate N-sulfotransferase 1">
    <location>
        <begin position="599"/>
        <end position="882"/>
    </location>
</feature>
<feature type="active site" description="For sulfotransferase activity" evidence="15">
    <location>
        <position position="614"/>
    </location>
</feature>
<feature type="binding site" evidence="3 17">
    <location>
        <begin position="614"/>
        <end position="618"/>
    </location>
    <ligand>
        <name>adenosine 3',5'-bisphosphate</name>
        <dbReference type="ChEBI" id="CHEBI:58343"/>
    </ligand>
</feature>
<feature type="binding site" evidence="3 17">
    <location>
        <position position="712"/>
    </location>
    <ligand>
        <name>adenosine 3',5'-bisphosphate</name>
        <dbReference type="ChEBI" id="CHEBI:58343"/>
    </ligand>
</feature>
<feature type="binding site" evidence="3 17">
    <location>
        <position position="817"/>
    </location>
    <ligand>
        <name>adenosine 3',5'-bisphosphate</name>
        <dbReference type="ChEBI" id="CHEBI:58343"/>
    </ligand>
</feature>
<feature type="binding site" evidence="3 17">
    <location>
        <begin position="833"/>
        <end position="837"/>
    </location>
    <ligand>
        <name>adenosine 3',5'-bisphosphate</name>
        <dbReference type="ChEBI" id="CHEBI:58343"/>
    </ligand>
</feature>
<feature type="glycosylation site" description="N-linked (GlcNAc...) asparagine" evidence="2">
    <location>
        <position position="231"/>
    </location>
</feature>
<feature type="glycosylation site" description="N-linked (GlcNAc...) asparagine" evidence="2">
    <location>
        <position position="351"/>
    </location>
</feature>
<feature type="glycosylation site" description="N-linked (GlcNAc...) asparagine" evidence="2">
    <location>
        <position position="401"/>
    </location>
</feature>
<feature type="glycosylation site" description="N-linked (GlcNAc...) asparagine" evidence="2">
    <location>
        <position position="667"/>
    </location>
</feature>
<feature type="disulfide bond" evidence="3 17">
    <location>
        <begin position="818"/>
        <end position="828"/>
    </location>
</feature>
<feature type="splice variant" id="VSP_017397" description="In isoform 2." evidence="10">
    <original>ISIFMTHLSNYGNDRLGLYTFKHLVRFLHSWTNL</original>
    <variation>VSAPQPMAAGEKGLLHSLSAADTGFLEPGKGGEA</variation>
    <location>
        <begin position="523"/>
        <end position="556"/>
    </location>
</feature>
<feature type="splice variant" id="VSP_017398" description="In isoform 2." evidence="10">
    <location>
        <begin position="557"/>
        <end position="882"/>
    </location>
</feature>
<feature type="splice variant" id="VSP_061518" description="In isoform 3." evidence="4">
    <location>
        <begin position="716"/>
        <end position="772"/>
    </location>
</feature>
<feature type="sequence variant" id="VAR_072646" description="In MRT46; dbSNP:rs606231459." evidence="6">
    <original>G</original>
    <variation>S</variation>
    <location>
        <position position="611"/>
    </location>
</feature>
<feature type="sequence variant" id="VAR_072647" description="In MRT46; dbSNP:rs606231458." evidence="6">
    <original>F</original>
    <variation>L</variation>
    <location>
        <position position="640"/>
    </location>
</feature>
<feature type="sequence variant" id="VAR_072648" description="In MRT46; dbSNP:rs606231457." evidence="6">
    <original>E</original>
    <variation>D</variation>
    <location>
        <position position="642"/>
    </location>
</feature>
<feature type="sequence variant" id="VAR_072649" description="In MRT46; dbSNP:rs606231456." evidence="6">
    <original>R</original>
    <variation>Q</variation>
    <location>
        <position position="709"/>
    </location>
</feature>
<feature type="mutagenesis site" description="Loss of heparan sulfate-glucosamine N-sulfotransferase activity." evidence="9">
    <original>K</original>
    <variation>A</variation>
    <location>
        <position position="614"/>
    </location>
</feature>
<feature type="sequence conflict" description="In Ref. 6; AAH12888." evidence="12" ref="6">
    <original>FIFCL</original>
    <variation>QVVCQ</variation>
    <location>
        <begin position="24"/>
        <end position="28"/>
    </location>
</feature>
<feature type="sequence conflict" description="In Ref. 3; AAA67765." evidence="12" ref="3">
    <original>P</original>
    <variation>A</variation>
    <location>
        <position position="60"/>
    </location>
</feature>
<feature type="sequence conflict" description="In Ref. 4; BAH11586." evidence="12" ref="4">
    <original>L</original>
    <variation>R</variation>
    <location>
        <position position="207"/>
    </location>
</feature>
<feature type="sequence conflict" description="In Ref. 6; AAH12888." evidence="12" ref="6">
    <original>H</original>
    <variation>Q</variation>
    <location>
        <position position="364"/>
    </location>
</feature>
<feature type="sequence conflict" description="In Ref. 3; AAA67765." evidence="12" ref="3">
    <original>R</original>
    <variation>G</variation>
    <location>
        <position position="689"/>
    </location>
</feature>
<feature type="sequence conflict" description="In Ref. 3; AAA67765." evidence="12" ref="3">
    <original>K</original>
    <variation>R</variation>
    <location>
        <position position="743"/>
    </location>
</feature>
<feature type="strand" evidence="20">
    <location>
        <begin position="85"/>
        <end position="88"/>
    </location>
</feature>
<feature type="helix" evidence="20">
    <location>
        <begin position="95"/>
        <end position="106"/>
    </location>
</feature>
<feature type="strand" evidence="20">
    <location>
        <begin position="111"/>
        <end position="114"/>
    </location>
</feature>
<feature type="strand" evidence="19">
    <location>
        <begin position="118"/>
        <end position="120"/>
    </location>
</feature>
<feature type="strand" evidence="20">
    <location>
        <begin position="126"/>
        <end position="132"/>
    </location>
</feature>
<feature type="strand" evidence="20">
    <location>
        <begin position="134"/>
        <end position="140"/>
    </location>
</feature>
<feature type="helix" evidence="20">
    <location>
        <begin position="142"/>
        <end position="145"/>
    </location>
</feature>
<feature type="helix" evidence="20">
    <location>
        <begin position="149"/>
        <end position="162"/>
    </location>
</feature>
<feature type="strand" evidence="20">
    <location>
        <begin position="165"/>
        <end position="167"/>
    </location>
</feature>
<feature type="strand" evidence="19">
    <location>
        <begin position="188"/>
        <end position="190"/>
    </location>
</feature>
<feature type="strand" evidence="20">
    <location>
        <begin position="208"/>
        <end position="210"/>
    </location>
</feature>
<feature type="strand" evidence="20">
    <location>
        <begin position="231"/>
        <end position="233"/>
    </location>
</feature>
<feature type="strand" evidence="21">
    <location>
        <begin position="235"/>
        <end position="238"/>
    </location>
</feature>
<feature type="strand" evidence="20">
    <location>
        <begin position="267"/>
        <end position="269"/>
    </location>
</feature>
<feature type="turn" evidence="20">
    <location>
        <begin position="271"/>
        <end position="274"/>
    </location>
</feature>
<feature type="strand" evidence="20">
    <location>
        <begin position="278"/>
        <end position="280"/>
    </location>
</feature>
<feature type="helix" evidence="20">
    <location>
        <begin position="288"/>
        <end position="301"/>
    </location>
</feature>
<feature type="strand" evidence="20">
    <location>
        <begin position="304"/>
        <end position="306"/>
    </location>
</feature>
<feature type="strand" evidence="20">
    <location>
        <begin position="310"/>
        <end position="321"/>
    </location>
</feature>
<feature type="turn" evidence="20">
    <location>
        <begin position="326"/>
        <end position="328"/>
    </location>
</feature>
<feature type="helix" evidence="20">
    <location>
        <begin position="332"/>
        <end position="348"/>
    </location>
</feature>
<feature type="strand" evidence="20">
    <location>
        <begin position="355"/>
        <end position="358"/>
    </location>
</feature>
<feature type="strand" evidence="20">
    <location>
        <begin position="360"/>
        <end position="362"/>
    </location>
</feature>
<feature type="helix" evidence="20">
    <location>
        <begin position="368"/>
        <end position="373"/>
    </location>
</feature>
<feature type="helix" evidence="20">
    <location>
        <begin position="376"/>
        <end position="378"/>
    </location>
</feature>
<feature type="turn" evidence="19">
    <location>
        <begin position="380"/>
        <end position="383"/>
    </location>
</feature>
<feature type="strand" evidence="20">
    <location>
        <begin position="385"/>
        <end position="388"/>
    </location>
</feature>
<feature type="turn" evidence="20">
    <location>
        <begin position="396"/>
        <end position="399"/>
    </location>
</feature>
<feature type="helix" evidence="20">
    <location>
        <begin position="402"/>
        <end position="419"/>
    </location>
</feature>
<feature type="strand" evidence="20">
    <location>
        <begin position="425"/>
        <end position="427"/>
    </location>
</feature>
<feature type="turn" evidence="20">
    <location>
        <begin position="434"/>
        <end position="439"/>
    </location>
</feature>
<feature type="helix" evidence="20">
    <location>
        <begin position="441"/>
        <end position="450"/>
    </location>
</feature>
<feature type="strand" evidence="20">
    <location>
        <begin position="455"/>
        <end position="459"/>
    </location>
</feature>
<feature type="strand" evidence="19">
    <location>
        <begin position="464"/>
        <end position="466"/>
    </location>
</feature>
<feature type="helix" evidence="20">
    <location>
        <begin position="467"/>
        <end position="469"/>
    </location>
</feature>
<feature type="strand" evidence="20">
    <location>
        <begin position="473"/>
        <end position="475"/>
    </location>
</feature>
<feature type="strand" evidence="20">
    <location>
        <begin position="478"/>
        <end position="484"/>
    </location>
</feature>
<feature type="strand" evidence="21">
    <location>
        <begin position="494"/>
        <end position="498"/>
    </location>
</feature>
<feature type="helix" evidence="20">
    <location>
        <begin position="502"/>
        <end position="509"/>
    </location>
</feature>
<feature type="helix" evidence="20">
    <location>
        <begin position="513"/>
        <end position="520"/>
    </location>
</feature>
<feature type="strand" evidence="20">
    <location>
        <begin position="522"/>
        <end position="528"/>
    </location>
</feature>
<feature type="helix" evidence="20">
    <location>
        <begin position="530"/>
        <end position="532"/>
    </location>
</feature>
<feature type="strand" evidence="19">
    <location>
        <begin position="534"/>
        <end position="536"/>
    </location>
</feature>
<feature type="helix" evidence="20">
    <location>
        <begin position="538"/>
        <end position="553"/>
    </location>
</feature>
<feature type="strand" evidence="20">
    <location>
        <begin position="557"/>
        <end position="559"/>
    </location>
</feature>
<feature type="helix" evidence="20">
    <location>
        <begin position="563"/>
        <end position="573"/>
    </location>
</feature>
<feature type="helix" evidence="20">
    <location>
        <begin position="575"/>
        <end position="578"/>
    </location>
</feature>
<feature type="turn" evidence="20">
    <location>
        <begin position="585"/>
        <end position="587"/>
    </location>
</feature>
<feature type="helix" evidence="20">
    <location>
        <begin position="589"/>
        <end position="594"/>
    </location>
</feature>
<feature type="strand" evidence="21">
    <location>
        <begin position="597"/>
        <end position="599"/>
    </location>
</feature>
<feature type="strand" evidence="18">
    <location>
        <begin position="604"/>
        <end position="609"/>
    </location>
</feature>
<feature type="strand" evidence="20">
    <location>
        <begin position="613"/>
        <end position="616"/>
    </location>
</feature>
<feature type="helix" evidence="18">
    <location>
        <begin position="617"/>
        <end position="625"/>
    </location>
</feature>
<feature type="strand" evidence="18">
    <location>
        <begin position="630"/>
        <end position="632"/>
    </location>
</feature>
<feature type="turn" evidence="18">
    <location>
        <begin position="637"/>
        <end position="639"/>
    </location>
</feature>
<feature type="strand" evidence="18">
    <location>
        <begin position="646"/>
        <end position="648"/>
    </location>
</feature>
<feature type="helix" evidence="18">
    <location>
        <begin position="649"/>
        <end position="653"/>
    </location>
</feature>
<feature type="helix" evidence="18">
    <location>
        <begin position="655"/>
        <end position="659"/>
    </location>
</feature>
<feature type="strand" evidence="20">
    <location>
        <begin position="667"/>
        <end position="669"/>
    </location>
</feature>
<feature type="strand" evidence="18">
    <location>
        <begin position="672"/>
        <end position="676"/>
    </location>
</feature>
<feature type="helix" evidence="18">
    <location>
        <begin position="679"/>
        <end position="682"/>
    </location>
</feature>
<feature type="helix" evidence="18">
    <location>
        <begin position="686"/>
        <end position="693"/>
    </location>
</feature>
<feature type="strand" evidence="18">
    <location>
        <begin position="698"/>
        <end position="703"/>
    </location>
</feature>
<feature type="helix" evidence="18">
    <location>
        <begin position="706"/>
        <end position="719"/>
    </location>
</feature>
<feature type="helix" evidence="18">
    <location>
        <begin position="723"/>
        <end position="727"/>
    </location>
</feature>
<feature type="helix" evidence="18">
    <location>
        <begin position="730"/>
        <end position="734"/>
    </location>
</feature>
<feature type="strand" evidence="19">
    <location>
        <begin position="738"/>
        <end position="740"/>
    </location>
</feature>
<feature type="helix" evidence="18">
    <location>
        <begin position="742"/>
        <end position="752"/>
    </location>
</feature>
<feature type="helix" evidence="18">
    <location>
        <begin position="753"/>
        <end position="755"/>
    </location>
</feature>
<feature type="helix" evidence="18">
    <location>
        <begin position="757"/>
        <end position="765"/>
    </location>
</feature>
<feature type="helix" evidence="18">
    <location>
        <begin position="770"/>
        <end position="772"/>
    </location>
</feature>
<feature type="strand" evidence="18">
    <location>
        <begin position="773"/>
        <end position="777"/>
    </location>
</feature>
<feature type="helix" evidence="18">
    <location>
        <begin position="778"/>
        <end position="783"/>
    </location>
</feature>
<feature type="helix" evidence="18">
    <location>
        <begin position="785"/>
        <end position="796"/>
    </location>
</feature>
<feature type="helix" evidence="18">
    <location>
        <begin position="805"/>
        <end position="807"/>
    </location>
</feature>
<feature type="strand" evidence="18">
    <location>
        <begin position="808"/>
        <end position="811"/>
    </location>
</feature>
<feature type="turn" evidence="18">
    <location>
        <begin position="812"/>
        <end position="815"/>
    </location>
</feature>
<feature type="strand" evidence="18">
    <location>
        <begin position="816"/>
        <end position="820"/>
    </location>
</feature>
<feature type="turn" evidence="20">
    <location>
        <begin position="830"/>
        <end position="833"/>
    </location>
</feature>
<feature type="helix" evidence="18">
    <location>
        <begin position="842"/>
        <end position="866"/>
    </location>
</feature>
<feature type="helix" evidence="18">
    <location>
        <begin position="872"/>
        <end position="878"/>
    </location>
</feature>
<keyword id="KW-0002">3D-structure</keyword>
<keyword id="KW-0025">Alternative splicing</keyword>
<keyword id="KW-0225">Disease variant</keyword>
<keyword id="KW-1015">Disulfide bond</keyword>
<keyword id="KW-0325">Glycoprotein</keyword>
<keyword id="KW-0333">Golgi apparatus</keyword>
<keyword id="KW-0378">Hydrolase</keyword>
<keyword id="KW-0395">Inflammatory response</keyword>
<keyword id="KW-0991">Intellectual disability</keyword>
<keyword id="KW-0472">Membrane</keyword>
<keyword id="KW-0511">Multifunctional enzyme</keyword>
<keyword id="KW-1267">Proteomics identification</keyword>
<keyword id="KW-1185">Reference proteome</keyword>
<keyword id="KW-0735">Signal-anchor</keyword>
<keyword id="KW-0808">Transferase</keyword>
<keyword id="KW-0812">Transmembrane</keyword>
<keyword id="KW-1133">Transmembrane helix</keyword>
<protein>
    <recommendedName>
        <fullName evidence="14">Bifunctional heparan sulfate N-deacetylase/N-sulfotransferase 1</fullName>
    </recommendedName>
    <alternativeName>
        <fullName>Glucosaminyl N-deacetylase/N-sulfotransferase 1</fullName>
        <shortName>NDST-1</shortName>
    </alternativeName>
    <alternativeName>
        <fullName>N-heparan sulfate sulfotransferase 1</fullName>
        <shortName>N-HSST 1</shortName>
    </alternativeName>
    <alternativeName>
        <fullName>[Heparan sulfate]-glucosamine N-sulfotransferase 1</fullName>
        <shortName>HSNST 1</shortName>
    </alternativeName>
    <domain>
        <recommendedName>
            <fullName>Heparan sulfate N-deacetylase 1</fullName>
            <ecNumber evidence="7 14">3.5.1.-</ecNumber>
        </recommendedName>
    </domain>
    <domain>
        <recommendedName>
            <fullName>Heparan sulfate N-sulfotransferase 1</fullName>
            <ecNumber evidence="7 8 9">2.8.2.8</ecNumber>
        </recommendedName>
    </domain>
</protein>
<name>NDST1_HUMAN</name>
<reference key="1">
    <citation type="journal article" date="1995" name="Genomics">
        <title>Cloning of the human heparan sulfate-N-deacetylase/N-sulfotransferase gene from the Treacher Collins syndrome candidate region at 5q32-q33.1.</title>
        <authorList>
            <person name="Dixon J."/>
            <person name="Loftus S.K."/>
            <person name="Gladwin A.J."/>
            <person name="Scambler P.J."/>
            <person name="Wasmuth J.J."/>
            <person name="Dixon M.J."/>
        </authorList>
    </citation>
    <scope>NUCLEOTIDE SEQUENCE [MRNA] (ISOFORM 1)</scope>
    <source>
        <tissue>Placenta</tissue>
    </source>
</reference>
<reference key="2">
    <citation type="journal article" date="1997" name="Biochem. J.">
        <title>Localization of human heparan glucosaminyl N-deacetylase/N-sulphotransferase to the trans-Golgi network.</title>
        <authorList>
            <person name="Humphries D.E."/>
            <person name="Sullivan B.M."/>
            <person name="Aleixo M.D."/>
            <person name="Stow J.L."/>
        </authorList>
    </citation>
    <scope>NUCLEOTIDE SEQUENCE [MRNA] (ISOFORM 1)</scope>
    <scope>FUNCTION (ISOFORM 1)</scope>
    <scope>CATALYTIC ACTIVITY (ISOFORM 1)</scope>
    <scope>PATHWAY (ISOFORM 1)</scope>
    <scope>SUBCELLULAR LOCATION (ISOFORM 1)</scope>
    <scope>TISSUE SPECIFICITY</scope>
    <scope>REGION</scope>
    <source>
        <tissue>Umbilical vein endothelial cell</tissue>
    </source>
</reference>
<reference key="3">
    <citation type="submission" date="1995-06" db="EMBL/GenBank/DDBJ databases">
        <authorList>
            <person name="Labell T.L."/>
            <person name="Milewicz D.J."/>
            <person name="Bonadio J."/>
            <person name="Edelhoff S."/>
            <person name="Disteche C.M."/>
            <person name="Byers P.H."/>
        </authorList>
    </citation>
    <scope>NUCLEOTIDE SEQUENCE [MRNA] (ISOFORM 1)</scope>
    <source>
        <tissue>Fibroblast</tissue>
    </source>
</reference>
<reference key="4">
    <citation type="journal article" date="2009" name="DNA Res.">
        <title>Identification and functional analyses of 11,769 full-length human cDNAs focused on alternative splicing.</title>
        <authorList>
            <person name="Wakamatsu A."/>
            <person name="Kimura K."/>
            <person name="Yamamoto J."/>
            <person name="Nishikawa T."/>
            <person name="Nomura N."/>
            <person name="Sugano S."/>
            <person name="Isogai T."/>
        </authorList>
    </citation>
    <scope>NUCLEOTIDE SEQUENCE [LARGE SCALE MRNA] (ISOFORM 3)</scope>
</reference>
<reference key="5">
    <citation type="journal article" date="2004" name="Nature">
        <title>The DNA sequence and comparative analysis of human chromosome 5.</title>
        <authorList>
            <person name="Schmutz J."/>
            <person name="Martin J."/>
            <person name="Terry A."/>
            <person name="Couronne O."/>
            <person name="Grimwood J."/>
            <person name="Lowry S."/>
            <person name="Gordon L.A."/>
            <person name="Scott D."/>
            <person name="Xie G."/>
            <person name="Huang W."/>
            <person name="Hellsten U."/>
            <person name="Tran-Gyamfi M."/>
            <person name="She X."/>
            <person name="Prabhakar S."/>
            <person name="Aerts A."/>
            <person name="Altherr M."/>
            <person name="Bajorek E."/>
            <person name="Black S."/>
            <person name="Branscomb E."/>
            <person name="Caoile C."/>
            <person name="Challacombe J.F."/>
            <person name="Chan Y.M."/>
            <person name="Denys M."/>
            <person name="Detter J.C."/>
            <person name="Escobar J."/>
            <person name="Flowers D."/>
            <person name="Fotopulos D."/>
            <person name="Glavina T."/>
            <person name="Gomez M."/>
            <person name="Gonzales E."/>
            <person name="Goodstein D."/>
            <person name="Grigoriev I."/>
            <person name="Groza M."/>
            <person name="Hammon N."/>
            <person name="Hawkins T."/>
            <person name="Haydu L."/>
            <person name="Israni S."/>
            <person name="Jett J."/>
            <person name="Kadner K."/>
            <person name="Kimball H."/>
            <person name="Kobayashi A."/>
            <person name="Lopez F."/>
            <person name="Lou Y."/>
            <person name="Martinez D."/>
            <person name="Medina C."/>
            <person name="Morgan J."/>
            <person name="Nandkeshwar R."/>
            <person name="Noonan J.P."/>
            <person name="Pitluck S."/>
            <person name="Pollard M."/>
            <person name="Predki P."/>
            <person name="Priest J."/>
            <person name="Ramirez L."/>
            <person name="Retterer J."/>
            <person name="Rodriguez A."/>
            <person name="Rogers S."/>
            <person name="Salamov A."/>
            <person name="Salazar A."/>
            <person name="Thayer N."/>
            <person name="Tice H."/>
            <person name="Tsai M."/>
            <person name="Ustaszewska A."/>
            <person name="Vo N."/>
            <person name="Wheeler J."/>
            <person name="Wu K."/>
            <person name="Yang J."/>
            <person name="Dickson M."/>
            <person name="Cheng J.-F."/>
            <person name="Eichler E.E."/>
            <person name="Olsen A."/>
            <person name="Pennacchio L.A."/>
            <person name="Rokhsar D.S."/>
            <person name="Richardson P."/>
            <person name="Lucas S.M."/>
            <person name="Myers R.M."/>
            <person name="Rubin E.M."/>
        </authorList>
    </citation>
    <scope>NUCLEOTIDE SEQUENCE [LARGE SCALE GENOMIC DNA] (ISOFORM 3)</scope>
</reference>
<reference key="6">
    <citation type="journal article" date="2004" name="Genome Res.">
        <title>The status, quality, and expansion of the NIH full-length cDNA project: the Mammalian Gene Collection (MGC).</title>
        <authorList>
            <consortium name="The MGC Project Team"/>
        </authorList>
    </citation>
    <scope>NUCLEOTIDE SEQUENCE [LARGE SCALE MRNA] (ISOFORM 2)</scope>
    <source>
        <tissue>Lung</tissue>
    </source>
</reference>
<reference key="7">
    <citation type="journal article" date="1998" name="FEBS Lett.">
        <title>A role of Lys614 in the sulfotransferase activity of human heparan sulfate N-deacetylase/N-sulfotransferase.</title>
        <authorList>
            <person name="Sueyoshi T."/>
            <person name="Kakuta Y."/>
            <person name="Pedersen L.C."/>
            <person name="Wall F.E."/>
            <person name="Pedersen L.G."/>
            <person name="Negishi M."/>
        </authorList>
    </citation>
    <scope>FUNCTION (ISOFORM 1)</scope>
    <scope>CATALYTIC ACTIVITY (ISOFORM 1)</scope>
    <scope>PATHWAY (ISOFORM 1)</scope>
    <scope>ACTIVE SITE</scope>
    <scope>MUTAGENESIS OF LYS-614</scope>
</reference>
<reference key="8">
    <citation type="journal article" date="2012" name="Nat. Cell Biol.">
        <title>Syndecan-syntenin-ALIX regulates the biogenesis of exosomes.</title>
        <authorList>
            <person name="Baietti M.F."/>
            <person name="Zhang Z."/>
            <person name="Mortier E."/>
            <person name="Melchior A."/>
            <person name="Degeest G."/>
            <person name="Geeraerts A."/>
            <person name="Ivarsson Y."/>
            <person name="Depoortere F."/>
            <person name="Coomans C."/>
            <person name="Vermeiren E."/>
            <person name="Zimmermann P."/>
            <person name="David G."/>
        </authorList>
    </citation>
    <scope>FUNCTION (ISOFORM 1)</scope>
</reference>
<reference key="9">
    <citation type="journal article" date="2022" name="Glycobiology">
        <title>A dominant negative splice variant of the heparan sulfate biosynthesis enzyme NDST1 reduces heparan sulfate sulfation.</title>
        <authorList>
            <person name="Missaghian P."/>
            <person name="Dierker T."/>
            <person name="Khosrowabadi E."/>
            <person name="Axling F."/>
            <person name="Eriksson I."/>
            <person name="Ghanem A."/>
            <person name="Kusche-Gullberg M."/>
            <person name="Kellokumpu S."/>
            <person name="Kjellen L."/>
        </authorList>
    </citation>
    <scope>FUNCTION (ISOFORMS 1 AND 3)</scope>
    <scope>CATALYTIC ACTIVITY (ISOFORM 1)</scope>
    <scope>SUBCELLULAR LOCATION (ISOFORMS 1 AND 3)</scope>
    <scope>INTERACTION WITH EXT1 AND EXT2 (ISOFORMS 1 AND 3)</scope>
    <scope>SUBUNIT (ISOFORMS 1 AND 3)</scope>
</reference>
<reference key="10">
    <citation type="journal article" date="1999" name="J. Biol. Chem.">
        <title>Crystal structure of the sulfotransferase domain of human heparan sulfate N-deacetylase/N-sulfotransferase 1.</title>
        <authorList>
            <person name="Kakuta Y."/>
            <person name="Sueyoshi T."/>
            <person name="Negishi M."/>
            <person name="Pedersen L.C."/>
        </authorList>
    </citation>
    <scope>X-RAY CRYSTALLOGRAPHY (2.3 ANGSTROMS) OF 579-882 IN COMPLEX WITH ADENOSINE 3',5'-BISPHOSPHATE</scope>
    <scope>SUBUNIT</scope>
    <scope>DISULFIDE BOND</scope>
</reference>
<reference key="11">
    <citation type="journal article" date="2014" name="Am. J. Med. Genet. A">
        <title>NDST1 missense mutations in autosomal recessive intellectual disability.</title>
        <authorList>
            <person name="Reuter M.S."/>
            <person name="Musante L."/>
            <person name="Hu H."/>
            <person name="Diederich S."/>
            <person name="Sticht H."/>
            <person name="Ekici A.B."/>
            <person name="Uebe S."/>
            <person name="Wienker T.F."/>
            <person name="Bartsch O."/>
            <person name="Zechner U."/>
            <person name="Oppitz C."/>
            <person name="Keleman K."/>
            <person name="Jamra R.A."/>
            <person name="Najmabadi H."/>
            <person name="Schweiger S."/>
            <person name="Reis A."/>
            <person name="Kahrizi K."/>
        </authorList>
    </citation>
    <scope>INVOLVEMENT IN MRT46</scope>
    <scope>VARIANTS MRT46 SER-611; LEU-640; ASP-642 AND GLN-709</scope>
</reference>
<dbReference type="EC" id="3.5.1.-" evidence="7 14"/>
<dbReference type="EC" id="2.8.2.8" evidence="7 8 9"/>
<dbReference type="EMBL" id="U18918">
    <property type="protein sequence ID" value="AAA75281.1"/>
    <property type="molecule type" value="mRNA"/>
</dbReference>
<dbReference type="EMBL" id="U36600">
    <property type="protein sequence ID" value="AAC27354.1"/>
    <property type="molecule type" value="mRNA"/>
</dbReference>
<dbReference type="EMBL" id="U17970">
    <property type="protein sequence ID" value="AAA67765.1"/>
    <property type="molecule type" value="mRNA"/>
</dbReference>
<dbReference type="EMBL" id="AK293746">
    <property type="protein sequence ID" value="BAH11586.1"/>
    <property type="molecule type" value="mRNA"/>
</dbReference>
<dbReference type="EMBL" id="AC008472">
    <property type="status" value="NOT_ANNOTATED_CDS"/>
    <property type="molecule type" value="Genomic_DNA"/>
</dbReference>
<dbReference type="EMBL" id="AC011383">
    <property type="status" value="NOT_ANNOTATED_CDS"/>
    <property type="molecule type" value="Genomic_DNA"/>
</dbReference>
<dbReference type="EMBL" id="KF510896">
    <property type="status" value="NOT_ANNOTATED_CDS"/>
    <property type="molecule type" value="Genomic_DNA"/>
</dbReference>
<dbReference type="EMBL" id="BC012888">
    <property type="protein sequence ID" value="AAH12888.1"/>
    <property type="molecule type" value="mRNA"/>
</dbReference>
<dbReference type="CCDS" id="CCDS34277.1">
    <molecule id="P52848-1"/>
</dbReference>
<dbReference type="CCDS" id="CCDS75358.1">
    <molecule id="P52848-3"/>
</dbReference>
<dbReference type="PIR" id="A57169">
    <property type="entry name" value="A57169"/>
</dbReference>
<dbReference type="RefSeq" id="NP_001287992.1">
    <molecule id="P52848-3"/>
    <property type="nucleotide sequence ID" value="NM_001301063.2"/>
</dbReference>
<dbReference type="RefSeq" id="NP_001534.1">
    <molecule id="P52848-1"/>
    <property type="nucleotide sequence ID" value="NM_001543.5"/>
</dbReference>
<dbReference type="RefSeq" id="XP_005268496.1">
    <property type="nucleotide sequence ID" value="XM_005268439.1"/>
</dbReference>
<dbReference type="RefSeq" id="XP_006714846.1">
    <property type="nucleotide sequence ID" value="XM_006714783.1"/>
</dbReference>
<dbReference type="RefSeq" id="XP_016864917.1">
    <property type="nucleotide sequence ID" value="XM_017009428.1"/>
</dbReference>
<dbReference type="RefSeq" id="XP_016864918.1">
    <property type="nucleotide sequence ID" value="XM_017009429.1"/>
</dbReference>
<dbReference type="RefSeq" id="XP_016864919.1">
    <property type="nucleotide sequence ID" value="XM_017009430.1"/>
</dbReference>
<dbReference type="RefSeq" id="XP_016864920.1">
    <property type="nucleotide sequence ID" value="XM_017009431.1"/>
</dbReference>
<dbReference type="PDB" id="1NST">
    <property type="method" value="X-ray"/>
    <property type="resolution" value="2.30 A"/>
    <property type="chains" value="A=558-882"/>
</dbReference>
<dbReference type="PDB" id="8CCY">
    <property type="method" value="EM"/>
    <property type="resolution" value="2.70 A"/>
    <property type="chains" value="A=79-882"/>
</dbReference>
<dbReference type="PDB" id="8CD0">
    <property type="method" value="EM"/>
    <property type="resolution" value="2.42 A"/>
    <property type="chains" value="A=1-882"/>
</dbReference>
<dbReference type="PDB" id="8CHS">
    <property type="method" value="EM"/>
    <property type="resolution" value="3.15 A"/>
    <property type="chains" value="A=79-882"/>
</dbReference>
<dbReference type="PDBsum" id="1NST"/>
<dbReference type="PDBsum" id="8CCY"/>
<dbReference type="PDBsum" id="8CD0"/>
<dbReference type="PDBsum" id="8CHS"/>
<dbReference type="EMDB" id="EMD-16564"/>
<dbReference type="EMDB" id="EMD-16565"/>
<dbReference type="EMDB" id="EMD-16626"/>
<dbReference type="EMDB" id="EMD-16627"/>
<dbReference type="EMDB" id="EMD-16629"/>
<dbReference type="EMDB" id="EMD-16661"/>
<dbReference type="EMDB" id="EMD-16662"/>
<dbReference type="EMDB" id="EMD-16663"/>
<dbReference type="EMDB" id="EMD-16664"/>
<dbReference type="EMDB" id="EMD-17349"/>
<dbReference type="SMR" id="P52848"/>
<dbReference type="BioGRID" id="109572">
    <property type="interactions" value="43"/>
</dbReference>
<dbReference type="FunCoup" id="P52848">
    <property type="interactions" value="1422"/>
</dbReference>
<dbReference type="IntAct" id="P52848">
    <property type="interactions" value="31"/>
</dbReference>
<dbReference type="STRING" id="9606.ENSP00000261797"/>
<dbReference type="DrugBank" id="DB01812">
    <property type="generic name" value="Adenosine 3',5'-diphosphate"/>
</dbReference>
<dbReference type="GlyCosmos" id="P52848">
    <property type="glycosylation" value="4 sites, No reported glycans"/>
</dbReference>
<dbReference type="GlyGen" id="P52848">
    <property type="glycosylation" value="7 sites, 1 N-linked glycan (1 site)"/>
</dbReference>
<dbReference type="iPTMnet" id="P52848"/>
<dbReference type="PhosphoSitePlus" id="P52848"/>
<dbReference type="SwissPalm" id="P52848"/>
<dbReference type="BioMuta" id="NDST1"/>
<dbReference type="jPOST" id="P52848"/>
<dbReference type="MassIVE" id="P52848"/>
<dbReference type="PaxDb" id="9606-ENSP00000261797"/>
<dbReference type="PeptideAtlas" id="P52848"/>
<dbReference type="ProteomicsDB" id="18650"/>
<dbReference type="ProteomicsDB" id="56543">
    <molecule id="P52848-1"/>
</dbReference>
<dbReference type="ProteomicsDB" id="56544">
    <molecule id="P52848-2"/>
</dbReference>
<dbReference type="Pumba" id="P52848"/>
<dbReference type="Antibodypedia" id="28038">
    <property type="antibodies" value="197 antibodies from 24 providers"/>
</dbReference>
<dbReference type="DNASU" id="3340"/>
<dbReference type="Ensembl" id="ENST00000261797.7">
    <molecule id="P52848-1"/>
    <property type="protein sequence ID" value="ENSP00000261797.6"/>
    <property type="gene ID" value="ENSG00000070614.15"/>
</dbReference>
<dbReference type="Ensembl" id="ENST00000523767.5">
    <molecule id="P52848-3"/>
    <property type="protein sequence ID" value="ENSP00000428604.1"/>
    <property type="gene ID" value="ENSG00000070614.15"/>
</dbReference>
<dbReference type="GeneID" id="3340"/>
<dbReference type="KEGG" id="hsa:3340"/>
<dbReference type="MANE-Select" id="ENST00000261797.7">
    <property type="protein sequence ID" value="ENSP00000261797.6"/>
    <property type="RefSeq nucleotide sequence ID" value="NM_001543.5"/>
    <property type="RefSeq protein sequence ID" value="NP_001534.1"/>
</dbReference>
<dbReference type="UCSC" id="uc003lsk.4">
    <molecule id="P52848-1"/>
    <property type="organism name" value="human"/>
</dbReference>
<dbReference type="AGR" id="HGNC:7680"/>
<dbReference type="CTD" id="3340"/>
<dbReference type="DisGeNET" id="3340"/>
<dbReference type="GeneCards" id="NDST1"/>
<dbReference type="HGNC" id="HGNC:7680">
    <property type="gene designation" value="NDST1"/>
</dbReference>
<dbReference type="HPA" id="ENSG00000070614">
    <property type="expression patterns" value="Low tissue specificity"/>
</dbReference>
<dbReference type="MalaCards" id="NDST1"/>
<dbReference type="MIM" id="600853">
    <property type="type" value="gene"/>
</dbReference>
<dbReference type="MIM" id="616116">
    <property type="type" value="phenotype"/>
</dbReference>
<dbReference type="neXtProt" id="NX_P52848"/>
<dbReference type="OpenTargets" id="ENSG00000070614"/>
<dbReference type="Orphanet" id="88616">
    <property type="disease" value="Autosomal recessive non-syndromic intellectual disability"/>
</dbReference>
<dbReference type="PharmGKB" id="PA31486"/>
<dbReference type="VEuPathDB" id="HostDB:ENSG00000070614"/>
<dbReference type="eggNOG" id="KOG3703">
    <property type="taxonomic scope" value="Eukaryota"/>
</dbReference>
<dbReference type="GeneTree" id="ENSGT00940000157857"/>
<dbReference type="HOGENOM" id="CLU_011357_2_0_1"/>
<dbReference type="InParanoid" id="P52848"/>
<dbReference type="OMA" id="VGPDCDE"/>
<dbReference type="OrthoDB" id="8958249at2759"/>
<dbReference type="PAN-GO" id="P52848">
    <property type="GO annotations" value="4 GO annotations based on evolutionary models"/>
</dbReference>
<dbReference type="PhylomeDB" id="P52848"/>
<dbReference type="TreeFam" id="TF313193"/>
<dbReference type="BioCyc" id="MetaCyc:HS01001-MONOMER"/>
<dbReference type="BRENDA" id="2.8.2.8">
    <property type="organism ID" value="2681"/>
</dbReference>
<dbReference type="PathwayCommons" id="P52848"/>
<dbReference type="Reactome" id="R-HSA-2022928">
    <property type="pathway name" value="HS-GAG biosynthesis"/>
</dbReference>
<dbReference type="SABIO-RK" id="P52848"/>
<dbReference type="SignaLink" id="P52848"/>
<dbReference type="UniPathway" id="UPA00756"/>
<dbReference type="UniPathway" id="UPA00862"/>
<dbReference type="BioGRID-ORCS" id="3340">
    <property type="hits" value="35 hits in 1166 CRISPR screens"/>
</dbReference>
<dbReference type="ChiTaRS" id="NDST1">
    <property type="organism name" value="human"/>
</dbReference>
<dbReference type="EvolutionaryTrace" id="P52848"/>
<dbReference type="GeneWiki" id="NDST1"/>
<dbReference type="GenomeRNAi" id="3340"/>
<dbReference type="Pharos" id="P52848">
    <property type="development level" value="Tbio"/>
</dbReference>
<dbReference type="PRO" id="PR:P52848"/>
<dbReference type="Proteomes" id="UP000005640">
    <property type="component" value="Chromosome 5"/>
</dbReference>
<dbReference type="RNAct" id="P52848">
    <property type="molecule type" value="protein"/>
</dbReference>
<dbReference type="Bgee" id="ENSG00000070614">
    <property type="expression patterns" value="Expressed in stromal cell of endometrium and 206 other cell types or tissues"/>
</dbReference>
<dbReference type="ExpressionAtlas" id="P52848">
    <property type="expression patterns" value="baseline and differential"/>
</dbReference>
<dbReference type="GO" id="GO:0005794">
    <property type="term" value="C:Golgi apparatus"/>
    <property type="evidence" value="ECO:0000318"/>
    <property type="project" value="GO_Central"/>
</dbReference>
<dbReference type="GO" id="GO:0000139">
    <property type="term" value="C:Golgi membrane"/>
    <property type="evidence" value="ECO:0000304"/>
    <property type="project" value="Reactome"/>
</dbReference>
<dbReference type="GO" id="GO:0032588">
    <property type="term" value="C:trans-Golgi network membrane"/>
    <property type="evidence" value="ECO:0000314"/>
    <property type="project" value="UniProtKB"/>
</dbReference>
<dbReference type="GO" id="GO:0019213">
    <property type="term" value="F:deacetylase activity"/>
    <property type="evidence" value="ECO:0000318"/>
    <property type="project" value="GO_Central"/>
</dbReference>
<dbReference type="GO" id="GO:0102140">
    <property type="term" value="F:heparan sulfate N-deacetylase activity"/>
    <property type="evidence" value="ECO:0000314"/>
    <property type="project" value="UniProtKB"/>
</dbReference>
<dbReference type="GO" id="GO:0015016">
    <property type="term" value="F:heparan sulfate N-sulfotransferase activity"/>
    <property type="evidence" value="ECO:0000314"/>
    <property type="project" value="UniProtKB"/>
</dbReference>
<dbReference type="GO" id="GO:0050119">
    <property type="term" value="F:N-acetylglucosamine deacetylase activity"/>
    <property type="evidence" value="ECO:0000304"/>
    <property type="project" value="Reactome"/>
</dbReference>
<dbReference type="GO" id="GO:0035904">
    <property type="term" value="P:aorta development"/>
    <property type="evidence" value="ECO:0007669"/>
    <property type="project" value="Ensembl"/>
</dbReference>
<dbReference type="GO" id="GO:0003279">
    <property type="term" value="P:cardiac septum development"/>
    <property type="evidence" value="ECO:0007669"/>
    <property type="project" value="Ensembl"/>
</dbReference>
<dbReference type="GO" id="GO:0008283">
    <property type="term" value="P:cell population proliferation"/>
    <property type="evidence" value="ECO:0007669"/>
    <property type="project" value="Ensembl"/>
</dbReference>
<dbReference type="GO" id="GO:0060976">
    <property type="term" value="P:coronary vasculature development"/>
    <property type="evidence" value="ECO:0007669"/>
    <property type="project" value="Ensembl"/>
</dbReference>
<dbReference type="GO" id="GO:0048702">
    <property type="term" value="P:embryonic neurocranium morphogenesis"/>
    <property type="evidence" value="ECO:0007669"/>
    <property type="project" value="Ensembl"/>
</dbReference>
<dbReference type="GO" id="GO:0048703">
    <property type="term" value="P:embryonic viscerocranium morphogenesis"/>
    <property type="evidence" value="ECO:0007669"/>
    <property type="project" value="Ensembl"/>
</dbReference>
<dbReference type="GO" id="GO:0008543">
    <property type="term" value="P:fibroblast growth factor receptor signaling pathway"/>
    <property type="evidence" value="ECO:0007669"/>
    <property type="project" value="Ensembl"/>
</dbReference>
<dbReference type="GO" id="GO:0030900">
    <property type="term" value="P:forebrain development"/>
    <property type="evidence" value="ECO:0007669"/>
    <property type="project" value="Ensembl"/>
</dbReference>
<dbReference type="GO" id="GO:0030203">
    <property type="term" value="P:glycosaminoglycan metabolic process"/>
    <property type="evidence" value="ECO:0007669"/>
    <property type="project" value="Ensembl"/>
</dbReference>
<dbReference type="GO" id="GO:0015012">
    <property type="term" value="P:heparan sulfate proteoglycan biosynthetic process"/>
    <property type="evidence" value="ECO:0000250"/>
    <property type="project" value="UniProtKB"/>
</dbReference>
<dbReference type="GO" id="GO:0030210">
    <property type="term" value="P:heparin proteoglycan biosynthetic process"/>
    <property type="evidence" value="ECO:0007669"/>
    <property type="project" value="UniProtKB-UniPathway"/>
</dbReference>
<dbReference type="GO" id="GO:0006954">
    <property type="term" value="P:inflammatory response"/>
    <property type="evidence" value="ECO:0007669"/>
    <property type="project" value="UniProtKB-KW"/>
</dbReference>
<dbReference type="GO" id="GO:0030901">
    <property type="term" value="P:midbrain development"/>
    <property type="evidence" value="ECO:0007669"/>
    <property type="project" value="Ensembl"/>
</dbReference>
<dbReference type="GO" id="GO:0000271">
    <property type="term" value="P:polysaccharide biosynthetic process"/>
    <property type="evidence" value="ECO:0007669"/>
    <property type="project" value="Ensembl"/>
</dbReference>
<dbReference type="GO" id="GO:0043410">
    <property type="term" value="P:positive regulation of MAPK cascade"/>
    <property type="evidence" value="ECO:0007669"/>
    <property type="project" value="Ensembl"/>
</dbReference>
<dbReference type="GO" id="GO:0045880">
    <property type="term" value="P:positive regulation of smoothened signaling pathway"/>
    <property type="evidence" value="ECO:0007669"/>
    <property type="project" value="Ensembl"/>
</dbReference>
<dbReference type="GO" id="GO:0007585">
    <property type="term" value="P:respiratory gaseous exchange by respiratory system"/>
    <property type="evidence" value="ECO:0007669"/>
    <property type="project" value="Ensembl"/>
</dbReference>
<dbReference type="FunFam" id="3.40.50.300:FF:000176">
    <property type="entry name" value="bifunctional heparan sulfate N-deacetylase/N-sulfotransferase 1"/>
    <property type="match status" value="1"/>
</dbReference>
<dbReference type="Gene3D" id="3.40.50.300">
    <property type="entry name" value="P-loop containing nucleotide triphosphate hydrolases"/>
    <property type="match status" value="1"/>
</dbReference>
<dbReference type="InterPro" id="IPR021930">
    <property type="entry name" value="Heparan_SO4_deacetylase_dom"/>
</dbReference>
<dbReference type="InterPro" id="IPR056793">
    <property type="entry name" value="HSNSD_N"/>
</dbReference>
<dbReference type="InterPro" id="IPR037359">
    <property type="entry name" value="NST/OST"/>
</dbReference>
<dbReference type="InterPro" id="IPR027417">
    <property type="entry name" value="P-loop_NTPase"/>
</dbReference>
<dbReference type="InterPro" id="IPR000863">
    <property type="entry name" value="Sulfotransferase_dom"/>
</dbReference>
<dbReference type="PANTHER" id="PTHR10605:SF30">
    <property type="entry name" value="BIFUNCTIONAL HEPARAN SULFATE N-DEACETYLASE_N-SULFOTRANSFERASE 1"/>
    <property type="match status" value="1"/>
</dbReference>
<dbReference type="PANTHER" id="PTHR10605">
    <property type="entry name" value="HEPARAN SULFATE SULFOTRANSFERASE"/>
    <property type="match status" value="1"/>
</dbReference>
<dbReference type="Pfam" id="PF12062">
    <property type="entry name" value="HSNSD-CE"/>
    <property type="match status" value="1"/>
</dbReference>
<dbReference type="Pfam" id="PF25119">
    <property type="entry name" value="HSNSD_N"/>
    <property type="match status" value="1"/>
</dbReference>
<dbReference type="Pfam" id="PF00685">
    <property type="entry name" value="Sulfotransfer_1"/>
    <property type="match status" value="1"/>
</dbReference>
<dbReference type="SUPFAM" id="SSF52540">
    <property type="entry name" value="P-loop containing nucleoside triphosphate hydrolases"/>
    <property type="match status" value="1"/>
</dbReference>
<accession>P52848</accession>
<accession>B7Z1Q0</accession>
<accession>E7EVJ3</accession>
<accession>Q96E57</accession>
<sequence length="882" mass="100868">MPALACLRRLCRHVSPQAVLFLLFIFCLFSVFISAYYLYGWKRGLEPSADAPEPDCGDPPPVAPSRLLPLKPVQAATPSRTDPLVLVFVESLYSQLGQEVVAILESSRFKYRTEIAPGKGDMPTLTDKGRGRFALIIYENILKYVNLDAWNRELLDKYCVAYGVGIIGFFKANENSLLSAQLKGFPLFLHSNLGLKDCSINPKSPLLYVTRPSEVEKGVLPGEDWTVFQSNHSTYEPVLLAKTRSSESIPHLGADAGLHAALHATVVQDLGLHDGIQRVLFGNNLNFWLHKLVFVDAVAFLTGKRLSLPLDRYILVDIDDIFVGKEGTRMKVEDVKALFDTQNELRAHIPNFTFNLGYSGKFFHTGTNAEDAGDDLLLSYVKEFWWFPHMWSHMQPHLFHNQSVLAEQMALNKKFAVEHGIPTDMGYAVAPHHSGVYPVHVQLYEAWKQVWSIRVTSTEEYPHLKPARYRRGFIHNGIMVLPRQTCGLFTHTIFYNEYPGGSSELDKIINGGELFLTVLLNPISIFMTHLSNYGNDRLGLYTFKHLVRFLHSWTNLRLQTLPPVQLAQKYFQIFSEEKDPLWQDPCEDKRHKDIWSKEKTCDRFPKLLIIGPQKTGTTALYLFLGMHPDLSSNYPSSETFEEIQFFNGHNYHKGIDWYMEFFPIPSNTTSDFYFEKSANYFDSEVAPRRAAALLPKAKVLTILINPADRAYSWYQHQRAHDDPVALKYTFHEVITAGSDASSKLRALQNRCLVPGWYATHIERWLSAYHANQILVLDGKLLRTEPAKVMDMVQKFLGVTNTIDYHKTLAFDPKKGFWCQLLEGGKTKCLGKSKGRKYPEMDLDSRAFLKDYYRDHNIELSKLLYKMGQTLPTWLREDLQNTR</sequence>
<proteinExistence type="evidence at protein level"/>
<organism>
    <name type="scientific">Homo sapiens</name>
    <name type="common">Human</name>
    <dbReference type="NCBI Taxonomy" id="9606"/>
    <lineage>
        <taxon>Eukaryota</taxon>
        <taxon>Metazoa</taxon>
        <taxon>Chordata</taxon>
        <taxon>Craniata</taxon>
        <taxon>Vertebrata</taxon>
        <taxon>Euteleostomi</taxon>
        <taxon>Mammalia</taxon>
        <taxon>Eutheria</taxon>
        <taxon>Euarchontoglires</taxon>
        <taxon>Primates</taxon>
        <taxon>Haplorrhini</taxon>
        <taxon>Catarrhini</taxon>
        <taxon>Hominidae</taxon>
        <taxon>Homo</taxon>
    </lineage>
</organism>